<feature type="chain" id="PRO_0000088307" description="3-phosphoshikimate 1-carboxyvinyltransferase">
    <location>
        <begin position="1"/>
        <end position="430"/>
    </location>
</feature>
<feature type="active site" description="Proton acceptor" evidence="1">
    <location>
        <position position="315"/>
    </location>
</feature>
<feature type="binding site" evidence="1">
    <location>
        <position position="23"/>
    </location>
    <ligand>
        <name>3-phosphoshikimate</name>
        <dbReference type="ChEBI" id="CHEBI:145989"/>
    </ligand>
</feature>
<feature type="binding site" evidence="1">
    <location>
        <position position="23"/>
    </location>
    <ligand>
        <name>phosphoenolpyruvate</name>
        <dbReference type="ChEBI" id="CHEBI:58702"/>
    </ligand>
</feature>
<feature type="binding site" evidence="1">
    <location>
        <position position="24"/>
    </location>
    <ligand>
        <name>3-phosphoshikimate</name>
        <dbReference type="ChEBI" id="CHEBI:145989"/>
    </ligand>
</feature>
<feature type="binding site" evidence="1">
    <location>
        <position position="28"/>
    </location>
    <ligand>
        <name>3-phosphoshikimate</name>
        <dbReference type="ChEBI" id="CHEBI:145989"/>
    </ligand>
</feature>
<feature type="binding site" evidence="1">
    <location>
        <position position="95"/>
    </location>
    <ligand>
        <name>phosphoenolpyruvate</name>
        <dbReference type="ChEBI" id="CHEBI:58702"/>
    </ligand>
</feature>
<feature type="binding site" evidence="1">
    <location>
        <position position="123"/>
    </location>
    <ligand>
        <name>phosphoenolpyruvate</name>
        <dbReference type="ChEBI" id="CHEBI:58702"/>
    </ligand>
</feature>
<feature type="binding site" evidence="1">
    <location>
        <position position="169"/>
    </location>
    <ligand>
        <name>3-phosphoshikimate</name>
        <dbReference type="ChEBI" id="CHEBI:145989"/>
    </ligand>
</feature>
<feature type="binding site" evidence="1">
    <location>
        <position position="171"/>
    </location>
    <ligand>
        <name>3-phosphoshikimate</name>
        <dbReference type="ChEBI" id="CHEBI:145989"/>
    </ligand>
</feature>
<feature type="binding site" evidence="1">
    <location>
        <position position="171"/>
    </location>
    <ligand>
        <name>phosphoenolpyruvate</name>
        <dbReference type="ChEBI" id="CHEBI:58702"/>
    </ligand>
</feature>
<feature type="binding site" evidence="1">
    <location>
        <position position="315"/>
    </location>
    <ligand>
        <name>3-phosphoshikimate</name>
        <dbReference type="ChEBI" id="CHEBI:145989"/>
    </ligand>
</feature>
<feature type="binding site" evidence="1">
    <location>
        <position position="342"/>
    </location>
    <ligand>
        <name>3-phosphoshikimate</name>
        <dbReference type="ChEBI" id="CHEBI:145989"/>
    </ligand>
</feature>
<feature type="binding site" evidence="1">
    <location>
        <position position="346"/>
    </location>
    <ligand>
        <name>phosphoenolpyruvate</name>
        <dbReference type="ChEBI" id="CHEBI:58702"/>
    </ligand>
</feature>
<feature type="binding site" evidence="1">
    <location>
        <position position="388"/>
    </location>
    <ligand>
        <name>phosphoenolpyruvate</name>
        <dbReference type="ChEBI" id="CHEBI:58702"/>
    </ligand>
</feature>
<accession>P0CZ72</accession>
<accession>Q8K719</accession>
<gene>
    <name evidence="1" type="primary">aroA</name>
    <name type="synonym">aroA.1</name>
    <name type="ordered locus">SpyM3_1027</name>
</gene>
<sequence length="430" mass="46691">MKRMKLRTNAGPLQGTIQVPGDKSISHRAVILGAVAKGETRVKGLLKGEDVLSTIQAFRNLGVRIEEKDDQLVIEGQGFQGLTAPCQTLNMGNSGTSMRLIAGLLAGQPFSVKMIGDESLSKRPMDRIVYPLKQMGVEISGETDRQFPPLQLQGNRNLQPITYTLPISSAQVKSAILLAALQAKGTTQVVEKEITRNHTEEMIQQFGGRLIVDGKRITLVGPQQLTAQEITVPGDISSAAFWLVAGLIIPGSELLLKNVGVNPTRTGILEVVEKMGAQIVYEDMNKKEQVTSIRVVYSRLKGTIISGGLIPRLIDELPIIALLATQAQGTTCIKDAQELRVKETDRIQVVTDTLNSMGANIKATADGMIIKGPTVLYGANTSTYGDHRIGMMTAIAALLVKQGQVHLDKEEAIMTSYPTFFKDLERLCHD</sequence>
<protein>
    <recommendedName>
        <fullName evidence="1">3-phosphoshikimate 1-carboxyvinyltransferase</fullName>
        <ecNumber evidence="1">2.5.1.19</ecNumber>
    </recommendedName>
    <alternativeName>
        <fullName evidence="1">5-enolpyruvylshikimate-3-phosphate synthase</fullName>
        <shortName evidence="1">EPSP synthase</shortName>
        <shortName evidence="1">EPSPS</shortName>
    </alternativeName>
</protein>
<reference key="1">
    <citation type="journal article" date="2002" name="Proc. Natl. Acad. Sci. U.S.A.">
        <title>Genome sequence of a serotype M3 strain of group A Streptococcus: phage-encoded toxins, the high-virulence phenotype, and clone emergence.</title>
        <authorList>
            <person name="Beres S.B."/>
            <person name="Sylva G.L."/>
            <person name="Barbian K.D."/>
            <person name="Lei B."/>
            <person name="Hoff J.S."/>
            <person name="Mammarella N.D."/>
            <person name="Liu M.-Y."/>
            <person name="Smoot J.C."/>
            <person name="Porcella S.F."/>
            <person name="Parkins L.D."/>
            <person name="Campbell D.S."/>
            <person name="Smith T.M."/>
            <person name="McCormick J.K."/>
            <person name="Leung D.Y.M."/>
            <person name="Schlievert P.M."/>
            <person name="Musser J.M."/>
        </authorList>
    </citation>
    <scope>NUCLEOTIDE SEQUENCE [LARGE SCALE GENOMIC DNA]</scope>
    <source>
        <strain>ATCC BAA-595 / MGAS315</strain>
    </source>
</reference>
<organism>
    <name type="scientific">Streptococcus pyogenes serotype M3 (strain ATCC BAA-595 / MGAS315)</name>
    <dbReference type="NCBI Taxonomy" id="198466"/>
    <lineage>
        <taxon>Bacteria</taxon>
        <taxon>Bacillati</taxon>
        <taxon>Bacillota</taxon>
        <taxon>Bacilli</taxon>
        <taxon>Lactobacillales</taxon>
        <taxon>Streptococcaceae</taxon>
        <taxon>Streptococcus</taxon>
    </lineage>
</organism>
<proteinExistence type="inferred from homology"/>
<comment type="function">
    <text evidence="1">Catalyzes the transfer of the enolpyruvyl moiety of phosphoenolpyruvate (PEP) to the 5-hydroxyl of shikimate-3-phosphate (S3P) to produce enolpyruvyl shikimate-3-phosphate and inorganic phosphate.</text>
</comment>
<comment type="catalytic activity">
    <reaction evidence="1">
        <text>3-phosphoshikimate + phosphoenolpyruvate = 5-O-(1-carboxyvinyl)-3-phosphoshikimate + phosphate</text>
        <dbReference type="Rhea" id="RHEA:21256"/>
        <dbReference type="ChEBI" id="CHEBI:43474"/>
        <dbReference type="ChEBI" id="CHEBI:57701"/>
        <dbReference type="ChEBI" id="CHEBI:58702"/>
        <dbReference type="ChEBI" id="CHEBI:145989"/>
        <dbReference type="EC" id="2.5.1.19"/>
    </reaction>
    <physiologicalReaction direction="left-to-right" evidence="1">
        <dbReference type="Rhea" id="RHEA:21257"/>
    </physiologicalReaction>
</comment>
<comment type="pathway">
    <text evidence="1">Metabolic intermediate biosynthesis; chorismate biosynthesis; chorismate from D-erythrose 4-phosphate and phosphoenolpyruvate: step 6/7.</text>
</comment>
<comment type="subunit">
    <text evidence="1">Monomer.</text>
</comment>
<comment type="subcellular location">
    <subcellularLocation>
        <location evidence="1">Cytoplasm</location>
    </subcellularLocation>
</comment>
<comment type="similarity">
    <text evidence="1">Belongs to the EPSP synthase family.</text>
</comment>
<evidence type="ECO:0000255" key="1">
    <source>
        <dbReference type="HAMAP-Rule" id="MF_00210"/>
    </source>
</evidence>
<name>AROA_STRP3</name>
<dbReference type="EC" id="2.5.1.19" evidence="1"/>
<dbReference type="EMBL" id="AE014074">
    <property type="protein sequence ID" value="AAM79634.1"/>
    <property type="molecule type" value="Genomic_DNA"/>
</dbReference>
<dbReference type="SMR" id="P0CZ72"/>
<dbReference type="KEGG" id="spg:SpyM3_1027"/>
<dbReference type="HOGENOM" id="CLU_024321_0_1_9"/>
<dbReference type="UniPathway" id="UPA00053">
    <property type="reaction ID" value="UER00089"/>
</dbReference>
<dbReference type="Proteomes" id="UP000000564">
    <property type="component" value="Chromosome"/>
</dbReference>
<dbReference type="GO" id="GO:0005737">
    <property type="term" value="C:cytoplasm"/>
    <property type="evidence" value="ECO:0007669"/>
    <property type="project" value="UniProtKB-SubCell"/>
</dbReference>
<dbReference type="GO" id="GO:0003866">
    <property type="term" value="F:3-phosphoshikimate 1-carboxyvinyltransferase activity"/>
    <property type="evidence" value="ECO:0007669"/>
    <property type="project" value="UniProtKB-UniRule"/>
</dbReference>
<dbReference type="GO" id="GO:0008652">
    <property type="term" value="P:amino acid biosynthetic process"/>
    <property type="evidence" value="ECO:0007669"/>
    <property type="project" value="UniProtKB-KW"/>
</dbReference>
<dbReference type="GO" id="GO:0009073">
    <property type="term" value="P:aromatic amino acid family biosynthetic process"/>
    <property type="evidence" value="ECO:0007669"/>
    <property type="project" value="UniProtKB-KW"/>
</dbReference>
<dbReference type="GO" id="GO:0009423">
    <property type="term" value="P:chorismate biosynthetic process"/>
    <property type="evidence" value="ECO:0007669"/>
    <property type="project" value="UniProtKB-UniRule"/>
</dbReference>
<dbReference type="CDD" id="cd01556">
    <property type="entry name" value="EPSP_synthase"/>
    <property type="match status" value="1"/>
</dbReference>
<dbReference type="FunFam" id="3.65.10.10:FF:000005">
    <property type="entry name" value="3-phosphoshikimate 1-carboxyvinyltransferase"/>
    <property type="match status" value="1"/>
</dbReference>
<dbReference type="FunFam" id="3.65.10.10:FF:000006">
    <property type="entry name" value="3-phosphoshikimate 1-carboxyvinyltransferase"/>
    <property type="match status" value="1"/>
</dbReference>
<dbReference type="Gene3D" id="3.65.10.10">
    <property type="entry name" value="Enolpyruvate transferase domain"/>
    <property type="match status" value="2"/>
</dbReference>
<dbReference type="HAMAP" id="MF_00210">
    <property type="entry name" value="EPSP_synth"/>
    <property type="match status" value="1"/>
</dbReference>
<dbReference type="InterPro" id="IPR001986">
    <property type="entry name" value="Enolpyruvate_Tfrase_dom"/>
</dbReference>
<dbReference type="InterPro" id="IPR036968">
    <property type="entry name" value="Enolpyruvate_Tfrase_sf"/>
</dbReference>
<dbReference type="InterPro" id="IPR006264">
    <property type="entry name" value="EPSP_synthase"/>
</dbReference>
<dbReference type="InterPro" id="IPR023193">
    <property type="entry name" value="EPSP_synthase_CS"/>
</dbReference>
<dbReference type="InterPro" id="IPR013792">
    <property type="entry name" value="RNA3'P_cycl/enolpyr_Trfase_a/b"/>
</dbReference>
<dbReference type="NCBIfam" id="TIGR01356">
    <property type="entry name" value="aroA"/>
    <property type="match status" value="1"/>
</dbReference>
<dbReference type="PANTHER" id="PTHR21090">
    <property type="entry name" value="AROM/DEHYDROQUINATE SYNTHASE"/>
    <property type="match status" value="1"/>
</dbReference>
<dbReference type="PANTHER" id="PTHR21090:SF5">
    <property type="entry name" value="PENTAFUNCTIONAL AROM POLYPEPTIDE"/>
    <property type="match status" value="1"/>
</dbReference>
<dbReference type="Pfam" id="PF00275">
    <property type="entry name" value="EPSP_synthase"/>
    <property type="match status" value="1"/>
</dbReference>
<dbReference type="PIRSF" id="PIRSF000505">
    <property type="entry name" value="EPSPS"/>
    <property type="match status" value="1"/>
</dbReference>
<dbReference type="SUPFAM" id="SSF55205">
    <property type="entry name" value="EPT/RTPC-like"/>
    <property type="match status" value="1"/>
</dbReference>
<dbReference type="PROSITE" id="PS00104">
    <property type="entry name" value="EPSP_SYNTHASE_1"/>
    <property type="match status" value="1"/>
</dbReference>
<dbReference type="PROSITE" id="PS00885">
    <property type="entry name" value="EPSP_SYNTHASE_2"/>
    <property type="match status" value="1"/>
</dbReference>
<keyword id="KW-0028">Amino-acid biosynthesis</keyword>
<keyword id="KW-0057">Aromatic amino acid biosynthesis</keyword>
<keyword id="KW-0963">Cytoplasm</keyword>
<keyword id="KW-0808">Transferase</keyword>